<accession>B2K5N1</accession>
<protein>
    <recommendedName>
        <fullName evidence="1">Small ribosomal subunit protein uS10</fullName>
    </recommendedName>
    <alternativeName>
        <fullName evidence="2">30S ribosomal protein S10</fullName>
    </alternativeName>
</protein>
<organism>
    <name type="scientific">Yersinia pseudotuberculosis serotype IB (strain PB1/+)</name>
    <dbReference type="NCBI Taxonomy" id="502801"/>
    <lineage>
        <taxon>Bacteria</taxon>
        <taxon>Pseudomonadati</taxon>
        <taxon>Pseudomonadota</taxon>
        <taxon>Gammaproteobacteria</taxon>
        <taxon>Enterobacterales</taxon>
        <taxon>Yersiniaceae</taxon>
        <taxon>Yersinia</taxon>
    </lineage>
</organism>
<name>RS10_YERPB</name>
<gene>
    <name evidence="1" type="primary">rpsJ</name>
    <name type="ordered locus">YPTS_3891</name>
</gene>
<feature type="chain" id="PRO_1000127209" description="Small ribosomal subunit protein uS10">
    <location>
        <begin position="1"/>
        <end position="103"/>
    </location>
</feature>
<keyword id="KW-0687">Ribonucleoprotein</keyword>
<keyword id="KW-0689">Ribosomal protein</keyword>
<dbReference type="EMBL" id="CP001048">
    <property type="protein sequence ID" value="ACC90840.1"/>
    <property type="molecule type" value="Genomic_DNA"/>
</dbReference>
<dbReference type="RefSeq" id="WP_001181005.1">
    <property type="nucleotide sequence ID" value="NZ_CP009780.1"/>
</dbReference>
<dbReference type="SMR" id="B2K5N1"/>
<dbReference type="GeneID" id="98390443"/>
<dbReference type="KEGG" id="ypb:YPTS_3891"/>
<dbReference type="PATRIC" id="fig|502801.10.peg.3356"/>
<dbReference type="GO" id="GO:1990904">
    <property type="term" value="C:ribonucleoprotein complex"/>
    <property type="evidence" value="ECO:0007669"/>
    <property type="project" value="UniProtKB-KW"/>
</dbReference>
<dbReference type="GO" id="GO:0005840">
    <property type="term" value="C:ribosome"/>
    <property type="evidence" value="ECO:0007669"/>
    <property type="project" value="UniProtKB-KW"/>
</dbReference>
<dbReference type="GO" id="GO:0003735">
    <property type="term" value="F:structural constituent of ribosome"/>
    <property type="evidence" value="ECO:0007669"/>
    <property type="project" value="InterPro"/>
</dbReference>
<dbReference type="GO" id="GO:0000049">
    <property type="term" value="F:tRNA binding"/>
    <property type="evidence" value="ECO:0007669"/>
    <property type="project" value="UniProtKB-UniRule"/>
</dbReference>
<dbReference type="GO" id="GO:0006412">
    <property type="term" value="P:translation"/>
    <property type="evidence" value="ECO:0007669"/>
    <property type="project" value="UniProtKB-UniRule"/>
</dbReference>
<dbReference type="FunFam" id="3.30.70.600:FF:000001">
    <property type="entry name" value="30S ribosomal protein S10"/>
    <property type="match status" value="1"/>
</dbReference>
<dbReference type="Gene3D" id="3.30.70.600">
    <property type="entry name" value="Ribosomal protein S10 domain"/>
    <property type="match status" value="1"/>
</dbReference>
<dbReference type="HAMAP" id="MF_00508">
    <property type="entry name" value="Ribosomal_uS10"/>
    <property type="match status" value="1"/>
</dbReference>
<dbReference type="InterPro" id="IPR001848">
    <property type="entry name" value="Ribosomal_uS10"/>
</dbReference>
<dbReference type="InterPro" id="IPR018268">
    <property type="entry name" value="Ribosomal_uS10_CS"/>
</dbReference>
<dbReference type="InterPro" id="IPR027486">
    <property type="entry name" value="Ribosomal_uS10_dom"/>
</dbReference>
<dbReference type="InterPro" id="IPR036838">
    <property type="entry name" value="Ribosomal_uS10_dom_sf"/>
</dbReference>
<dbReference type="NCBIfam" id="NF001861">
    <property type="entry name" value="PRK00596.1"/>
    <property type="match status" value="1"/>
</dbReference>
<dbReference type="NCBIfam" id="TIGR01049">
    <property type="entry name" value="rpsJ_bact"/>
    <property type="match status" value="1"/>
</dbReference>
<dbReference type="PANTHER" id="PTHR11700">
    <property type="entry name" value="30S RIBOSOMAL PROTEIN S10 FAMILY MEMBER"/>
    <property type="match status" value="1"/>
</dbReference>
<dbReference type="Pfam" id="PF00338">
    <property type="entry name" value="Ribosomal_S10"/>
    <property type="match status" value="1"/>
</dbReference>
<dbReference type="PRINTS" id="PR00971">
    <property type="entry name" value="RIBOSOMALS10"/>
</dbReference>
<dbReference type="SMART" id="SM01403">
    <property type="entry name" value="Ribosomal_S10"/>
    <property type="match status" value="1"/>
</dbReference>
<dbReference type="SUPFAM" id="SSF54999">
    <property type="entry name" value="Ribosomal protein S10"/>
    <property type="match status" value="1"/>
</dbReference>
<dbReference type="PROSITE" id="PS00361">
    <property type="entry name" value="RIBOSOMAL_S10"/>
    <property type="match status" value="1"/>
</dbReference>
<evidence type="ECO:0000255" key="1">
    <source>
        <dbReference type="HAMAP-Rule" id="MF_00508"/>
    </source>
</evidence>
<evidence type="ECO:0000305" key="2"/>
<reference key="1">
    <citation type="submission" date="2008-04" db="EMBL/GenBank/DDBJ databases">
        <title>Complete sequence of Yersinia pseudotuberculosis PB1/+.</title>
        <authorList>
            <person name="Copeland A."/>
            <person name="Lucas S."/>
            <person name="Lapidus A."/>
            <person name="Glavina del Rio T."/>
            <person name="Dalin E."/>
            <person name="Tice H."/>
            <person name="Bruce D."/>
            <person name="Goodwin L."/>
            <person name="Pitluck S."/>
            <person name="Munk A.C."/>
            <person name="Brettin T."/>
            <person name="Detter J.C."/>
            <person name="Han C."/>
            <person name="Tapia R."/>
            <person name="Schmutz J."/>
            <person name="Larimer F."/>
            <person name="Land M."/>
            <person name="Hauser L."/>
            <person name="Challacombe J.F."/>
            <person name="Green L."/>
            <person name="Lindler L.E."/>
            <person name="Nikolich M.P."/>
            <person name="Richardson P."/>
        </authorList>
    </citation>
    <scope>NUCLEOTIDE SEQUENCE [LARGE SCALE GENOMIC DNA]</scope>
    <source>
        <strain>PB1/+</strain>
    </source>
</reference>
<comment type="function">
    <text evidence="1">Involved in the binding of tRNA to the ribosomes.</text>
</comment>
<comment type="subunit">
    <text evidence="1">Part of the 30S ribosomal subunit.</text>
</comment>
<comment type="similarity">
    <text evidence="1">Belongs to the universal ribosomal protein uS10 family.</text>
</comment>
<proteinExistence type="inferred from homology"/>
<sequence>MQNQRIRIRLKAFDHRLIDQSTAEIVETAKRTGAQVRGPIPLPTRKERFTVLISPHVNKDARDQYEIRTHKRLVDIVEPTEKTVDALMRLDLAAGVDVQISLG</sequence>